<organism>
    <name type="scientific">Cellvibrio japonicus (strain Ueda107)</name>
    <name type="common">Pseudomonas fluorescens subsp. cellulosa</name>
    <dbReference type="NCBI Taxonomy" id="498211"/>
    <lineage>
        <taxon>Bacteria</taxon>
        <taxon>Pseudomonadati</taxon>
        <taxon>Pseudomonadota</taxon>
        <taxon>Gammaproteobacteria</taxon>
        <taxon>Cellvibrionales</taxon>
        <taxon>Cellvibrionaceae</taxon>
        <taxon>Cellvibrio</taxon>
    </lineage>
</organism>
<gene>
    <name evidence="1" type="primary">fabZ</name>
    <name type="ordered locus">CJA_1123</name>
</gene>
<accession>B3PBQ9</accession>
<comment type="function">
    <text evidence="1">Involved in unsaturated fatty acids biosynthesis. Catalyzes the dehydration of short chain beta-hydroxyacyl-ACPs and long chain saturated and unsaturated beta-hydroxyacyl-ACPs.</text>
</comment>
<comment type="catalytic activity">
    <reaction evidence="1">
        <text>a (3R)-hydroxyacyl-[ACP] = a (2E)-enoyl-[ACP] + H2O</text>
        <dbReference type="Rhea" id="RHEA:13097"/>
        <dbReference type="Rhea" id="RHEA-COMP:9925"/>
        <dbReference type="Rhea" id="RHEA-COMP:9945"/>
        <dbReference type="ChEBI" id="CHEBI:15377"/>
        <dbReference type="ChEBI" id="CHEBI:78784"/>
        <dbReference type="ChEBI" id="CHEBI:78827"/>
        <dbReference type="EC" id="4.2.1.59"/>
    </reaction>
</comment>
<comment type="subcellular location">
    <subcellularLocation>
        <location evidence="1">Cytoplasm</location>
    </subcellularLocation>
</comment>
<comment type="similarity">
    <text evidence="1">Belongs to the thioester dehydratase family. FabZ subfamily.</text>
</comment>
<keyword id="KW-0963">Cytoplasm</keyword>
<keyword id="KW-0441">Lipid A biosynthesis</keyword>
<keyword id="KW-0444">Lipid biosynthesis</keyword>
<keyword id="KW-0443">Lipid metabolism</keyword>
<keyword id="KW-0456">Lyase</keyword>
<keyword id="KW-1185">Reference proteome</keyword>
<reference key="1">
    <citation type="journal article" date="2008" name="J. Bacteriol.">
        <title>Insights into plant cell wall degradation from the genome sequence of the soil bacterium Cellvibrio japonicus.</title>
        <authorList>
            <person name="DeBoy R.T."/>
            <person name="Mongodin E.F."/>
            <person name="Fouts D.E."/>
            <person name="Tailford L.E."/>
            <person name="Khouri H."/>
            <person name="Emerson J.B."/>
            <person name="Mohamoud Y."/>
            <person name="Watkins K."/>
            <person name="Henrissat B."/>
            <person name="Gilbert H.J."/>
            <person name="Nelson K.E."/>
        </authorList>
    </citation>
    <scope>NUCLEOTIDE SEQUENCE [LARGE SCALE GENOMIC DNA]</scope>
    <source>
        <strain>Ueda107</strain>
    </source>
</reference>
<proteinExistence type="inferred from homology"/>
<protein>
    <recommendedName>
        <fullName evidence="1">3-hydroxyacyl-[acyl-carrier-protein] dehydratase FabZ</fullName>
        <ecNumber evidence="1">4.2.1.59</ecNumber>
    </recommendedName>
    <alternativeName>
        <fullName evidence="1">(3R)-hydroxymyristoyl-[acyl-carrier-protein] dehydratase</fullName>
        <shortName evidence="1">(3R)-hydroxymyristoyl-ACP dehydrase</shortName>
    </alternativeName>
    <alternativeName>
        <fullName evidence="1">Beta-hydroxyacyl-ACP dehydratase</fullName>
    </alternativeName>
</protein>
<name>FABZ_CELJU</name>
<feature type="chain" id="PRO_1000197284" description="3-hydroxyacyl-[acyl-carrier-protein] dehydratase FabZ">
    <location>
        <begin position="1"/>
        <end position="145"/>
    </location>
</feature>
<feature type="active site" evidence="1">
    <location>
        <position position="48"/>
    </location>
</feature>
<evidence type="ECO:0000255" key="1">
    <source>
        <dbReference type="HAMAP-Rule" id="MF_00406"/>
    </source>
</evidence>
<dbReference type="EC" id="4.2.1.59" evidence="1"/>
<dbReference type="EMBL" id="CP000934">
    <property type="protein sequence ID" value="ACE83778.1"/>
    <property type="molecule type" value="Genomic_DNA"/>
</dbReference>
<dbReference type="RefSeq" id="WP_012486771.1">
    <property type="nucleotide sequence ID" value="NC_010995.1"/>
</dbReference>
<dbReference type="SMR" id="B3PBQ9"/>
<dbReference type="STRING" id="498211.CJA_1123"/>
<dbReference type="KEGG" id="cja:CJA_1123"/>
<dbReference type="eggNOG" id="COG0764">
    <property type="taxonomic scope" value="Bacteria"/>
</dbReference>
<dbReference type="HOGENOM" id="CLU_078912_1_0_6"/>
<dbReference type="OrthoDB" id="9772788at2"/>
<dbReference type="Proteomes" id="UP000001036">
    <property type="component" value="Chromosome"/>
</dbReference>
<dbReference type="GO" id="GO:0005737">
    <property type="term" value="C:cytoplasm"/>
    <property type="evidence" value="ECO:0007669"/>
    <property type="project" value="UniProtKB-SubCell"/>
</dbReference>
<dbReference type="GO" id="GO:0016020">
    <property type="term" value="C:membrane"/>
    <property type="evidence" value="ECO:0007669"/>
    <property type="project" value="GOC"/>
</dbReference>
<dbReference type="GO" id="GO:0019171">
    <property type="term" value="F:(3R)-hydroxyacyl-[acyl-carrier-protein] dehydratase activity"/>
    <property type="evidence" value="ECO:0007669"/>
    <property type="project" value="UniProtKB-EC"/>
</dbReference>
<dbReference type="GO" id="GO:0006633">
    <property type="term" value="P:fatty acid biosynthetic process"/>
    <property type="evidence" value="ECO:0007669"/>
    <property type="project" value="UniProtKB-UniRule"/>
</dbReference>
<dbReference type="GO" id="GO:0009245">
    <property type="term" value="P:lipid A biosynthetic process"/>
    <property type="evidence" value="ECO:0007669"/>
    <property type="project" value="UniProtKB-UniRule"/>
</dbReference>
<dbReference type="CDD" id="cd01288">
    <property type="entry name" value="FabZ"/>
    <property type="match status" value="1"/>
</dbReference>
<dbReference type="FunFam" id="3.10.129.10:FF:000001">
    <property type="entry name" value="3-hydroxyacyl-[acyl-carrier-protein] dehydratase FabZ"/>
    <property type="match status" value="1"/>
</dbReference>
<dbReference type="Gene3D" id="3.10.129.10">
    <property type="entry name" value="Hotdog Thioesterase"/>
    <property type="match status" value="1"/>
</dbReference>
<dbReference type="HAMAP" id="MF_00406">
    <property type="entry name" value="FabZ"/>
    <property type="match status" value="1"/>
</dbReference>
<dbReference type="InterPro" id="IPR013114">
    <property type="entry name" value="FabA_FabZ"/>
</dbReference>
<dbReference type="InterPro" id="IPR010084">
    <property type="entry name" value="FabZ"/>
</dbReference>
<dbReference type="InterPro" id="IPR029069">
    <property type="entry name" value="HotDog_dom_sf"/>
</dbReference>
<dbReference type="NCBIfam" id="TIGR01750">
    <property type="entry name" value="fabZ"/>
    <property type="match status" value="1"/>
</dbReference>
<dbReference type="NCBIfam" id="NF000582">
    <property type="entry name" value="PRK00006.1"/>
    <property type="match status" value="1"/>
</dbReference>
<dbReference type="PANTHER" id="PTHR30272">
    <property type="entry name" value="3-HYDROXYACYL-[ACYL-CARRIER-PROTEIN] DEHYDRATASE"/>
    <property type="match status" value="1"/>
</dbReference>
<dbReference type="PANTHER" id="PTHR30272:SF1">
    <property type="entry name" value="3-HYDROXYACYL-[ACYL-CARRIER-PROTEIN] DEHYDRATASE"/>
    <property type="match status" value="1"/>
</dbReference>
<dbReference type="Pfam" id="PF07977">
    <property type="entry name" value="FabA"/>
    <property type="match status" value="1"/>
</dbReference>
<dbReference type="SUPFAM" id="SSF54637">
    <property type="entry name" value="Thioesterase/thiol ester dehydrase-isomerase"/>
    <property type="match status" value="1"/>
</dbReference>
<sequence length="145" mass="16290">MMDVNEIREYLPHRYPFLLVDRVVELVEGESIIAYKNITVNEEVFNGHFPQNPVFPGVMILEAMAQASGILGFKTMGKKPEDGSIYLFAGVDDVRFKRQVVPGDRLQLESRVISEKRGIWKFECKATVDGVLAASATILCADRKV</sequence>